<protein>
    <recommendedName>
        <fullName>Probable RuBisCO transcriptional regulator</fullName>
    </recommendedName>
</protein>
<sequence length="337" mass="37402">MSDLPFTLDQLRILKAIAVEGSFKRAADSLYVSQPAVSLQVQNLERQLDVPLFDRGGRRAQLTEAGHLLLSYGEKILSLCQETCRAIEDLQNLQGGTLIVGASQTTGTYLLPKMIGMFRQKYPDVAVQLHVHSTRRTAWSVANGQVDLAIIGGEIPGELTESLEIIPYAEDELALILPVFHPFTKLDTIQKEDLYKLQFITLDSQSTIRKVIDQVLSRSEIDTRRFKIEMELNSIEAIKNAVQSGLGAAFVSTSAIAKELQMGVLHCTPIDGVVIKRTLWLIFNPNRYRSKAAEAFSQEILPQFATPDWNQDVLKLAQKKLVVNVLDAAIPNTSDDG</sequence>
<accession>Q8YQ82</accession>
<proteinExistence type="inferred from homology"/>
<gene>
    <name type="primary">rbcR</name>
    <name type="ordered locus">all3953</name>
</gene>
<name>RBCR_NOSS1</name>
<reference key="1">
    <citation type="journal article" date="2001" name="DNA Res.">
        <title>Complete genomic sequence of the filamentous nitrogen-fixing cyanobacterium Anabaena sp. strain PCC 7120.</title>
        <authorList>
            <person name="Kaneko T."/>
            <person name="Nakamura Y."/>
            <person name="Wolk C.P."/>
            <person name="Kuritz T."/>
            <person name="Sasamoto S."/>
            <person name="Watanabe A."/>
            <person name="Iriguchi M."/>
            <person name="Ishikawa A."/>
            <person name="Kawashima K."/>
            <person name="Kimura T."/>
            <person name="Kishida Y."/>
            <person name="Kohara M."/>
            <person name="Matsumoto M."/>
            <person name="Matsuno A."/>
            <person name="Muraki A."/>
            <person name="Nakazaki N."/>
            <person name="Shimpo S."/>
            <person name="Sugimoto M."/>
            <person name="Takazawa M."/>
            <person name="Yamada M."/>
            <person name="Yasuda M."/>
            <person name="Tabata S."/>
        </authorList>
    </citation>
    <scope>NUCLEOTIDE SEQUENCE [LARGE SCALE GENOMIC DNA]</scope>
    <source>
        <strain>PCC 7120 / SAG 25.82 / UTEX 2576</strain>
    </source>
</reference>
<dbReference type="EMBL" id="BA000019">
    <property type="protein sequence ID" value="BAB75652.1"/>
    <property type="molecule type" value="Genomic_DNA"/>
</dbReference>
<dbReference type="PIR" id="AB2300">
    <property type="entry name" value="AB2300"/>
</dbReference>
<dbReference type="RefSeq" id="WP_010998094.1">
    <property type="nucleotide sequence ID" value="NZ_RSCN01000045.1"/>
</dbReference>
<dbReference type="SMR" id="Q8YQ82"/>
<dbReference type="STRING" id="103690.gene:10495995"/>
<dbReference type="KEGG" id="ana:all3953"/>
<dbReference type="eggNOG" id="COG0583">
    <property type="taxonomic scope" value="Bacteria"/>
</dbReference>
<dbReference type="OrthoDB" id="9785745at2"/>
<dbReference type="Proteomes" id="UP000002483">
    <property type="component" value="Chromosome"/>
</dbReference>
<dbReference type="GO" id="GO:0003700">
    <property type="term" value="F:DNA-binding transcription factor activity"/>
    <property type="evidence" value="ECO:0007669"/>
    <property type="project" value="InterPro"/>
</dbReference>
<dbReference type="GO" id="GO:0000976">
    <property type="term" value="F:transcription cis-regulatory region binding"/>
    <property type="evidence" value="ECO:0007669"/>
    <property type="project" value="TreeGrafter"/>
</dbReference>
<dbReference type="CDD" id="cd08420">
    <property type="entry name" value="PBP2_CysL_like"/>
    <property type="match status" value="1"/>
</dbReference>
<dbReference type="FunFam" id="1.10.10.10:FF:000001">
    <property type="entry name" value="LysR family transcriptional regulator"/>
    <property type="match status" value="1"/>
</dbReference>
<dbReference type="Gene3D" id="3.40.190.290">
    <property type="match status" value="1"/>
</dbReference>
<dbReference type="Gene3D" id="1.10.10.10">
    <property type="entry name" value="Winged helix-like DNA-binding domain superfamily/Winged helix DNA-binding domain"/>
    <property type="match status" value="1"/>
</dbReference>
<dbReference type="InterPro" id="IPR005119">
    <property type="entry name" value="LysR_subst-bd"/>
</dbReference>
<dbReference type="InterPro" id="IPR000847">
    <property type="entry name" value="Tscrpt_reg_HTH_LysR"/>
</dbReference>
<dbReference type="InterPro" id="IPR036388">
    <property type="entry name" value="WH-like_DNA-bd_sf"/>
</dbReference>
<dbReference type="InterPro" id="IPR036390">
    <property type="entry name" value="WH_DNA-bd_sf"/>
</dbReference>
<dbReference type="PANTHER" id="PTHR30126">
    <property type="entry name" value="HTH-TYPE TRANSCRIPTIONAL REGULATOR"/>
    <property type="match status" value="1"/>
</dbReference>
<dbReference type="PANTHER" id="PTHR30126:SF39">
    <property type="entry name" value="HTH-TYPE TRANSCRIPTIONAL REGULATOR CYSL"/>
    <property type="match status" value="1"/>
</dbReference>
<dbReference type="Pfam" id="PF00126">
    <property type="entry name" value="HTH_1"/>
    <property type="match status" value="1"/>
</dbReference>
<dbReference type="Pfam" id="PF03466">
    <property type="entry name" value="LysR_substrate"/>
    <property type="match status" value="1"/>
</dbReference>
<dbReference type="PRINTS" id="PR00039">
    <property type="entry name" value="HTHLYSR"/>
</dbReference>
<dbReference type="SUPFAM" id="SSF53850">
    <property type="entry name" value="Periplasmic binding protein-like II"/>
    <property type="match status" value="1"/>
</dbReference>
<dbReference type="SUPFAM" id="SSF46785">
    <property type="entry name" value="Winged helix' DNA-binding domain"/>
    <property type="match status" value="1"/>
</dbReference>
<dbReference type="PROSITE" id="PS50931">
    <property type="entry name" value="HTH_LYSR"/>
    <property type="match status" value="1"/>
</dbReference>
<feature type="chain" id="PRO_0000280080" description="Probable RuBisCO transcriptional regulator">
    <location>
        <begin position="1"/>
        <end position="337"/>
    </location>
</feature>
<feature type="domain" description="HTH lysR-type" evidence="2">
    <location>
        <begin position="6"/>
        <end position="63"/>
    </location>
</feature>
<feature type="DNA-binding region" description="H-T-H motif" evidence="2">
    <location>
        <begin position="23"/>
        <end position="42"/>
    </location>
</feature>
<organism>
    <name type="scientific">Nostoc sp. (strain PCC 7120 / SAG 25.82 / UTEX 2576)</name>
    <dbReference type="NCBI Taxonomy" id="103690"/>
    <lineage>
        <taxon>Bacteria</taxon>
        <taxon>Bacillati</taxon>
        <taxon>Cyanobacteriota</taxon>
        <taxon>Cyanophyceae</taxon>
        <taxon>Nostocales</taxon>
        <taxon>Nostocaceae</taxon>
        <taxon>Nostoc</taxon>
    </lineage>
</organism>
<evidence type="ECO:0000250" key="1"/>
<evidence type="ECO:0000255" key="2">
    <source>
        <dbReference type="PROSITE-ProRule" id="PRU00253"/>
    </source>
</evidence>
<evidence type="ECO:0000305" key="3"/>
<comment type="function">
    <text evidence="1">Trans-acting transcriptional regulator of RuBisCO genes (rbcL and rbcS) expression.</text>
</comment>
<comment type="similarity">
    <text evidence="3">Belongs to the LysR transcriptional regulatory family.</text>
</comment>
<keyword id="KW-0238">DNA-binding</keyword>
<keyword id="KW-1185">Reference proteome</keyword>
<keyword id="KW-0804">Transcription</keyword>
<keyword id="KW-0805">Transcription regulation</keyword>